<keyword id="KW-0028">Amino-acid biosynthesis</keyword>
<keyword id="KW-0055">Arginine biosynthesis</keyword>
<keyword id="KW-0963">Cytoplasm</keyword>
<keyword id="KW-0238">DNA-binding</keyword>
<keyword id="KW-0678">Repressor</keyword>
<keyword id="KW-0804">Transcription</keyword>
<keyword id="KW-0805">Transcription regulation</keyword>
<proteinExistence type="inferred from homology"/>
<reference key="1">
    <citation type="journal article" date="2004" name="Proc. Natl. Acad. Sci. U.S.A.">
        <title>Genomic analysis of Bacteroides fragilis reveals extensive DNA inversions regulating cell surface adaptation.</title>
        <authorList>
            <person name="Kuwahara T."/>
            <person name="Yamashita A."/>
            <person name="Hirakawa H."/>
            <person name="Nakayama H."/>
            <person name="Toh H."/>
            <person name="Okada N."/>
            <person name="Kuhara S."/>
            <person name="Hattori M."/>
            <person name="Hayashi T."/>
            <person name="Ohnishi Y."/>
        </authorList>
    </citation>
    <scope>NUCLEOTIDE SEQUENCE [LARGE SCALE GENOMIC DNA]</scope>
    <source>
        <strain>YCH46</strain>
    </source>
</reference>
<comment type="function">
    <text evidence="1">Regulates arginine biosynthesis genes.</text>
</comment>
<comment type="pathway">
    <text>Amino-acid biosynthesis; L-arginine biosynthesis [regulation].</text>
</comment>
<comment type="subcellular location">
    <subcellularLocation>
        <location evidence="1">Cytoplasm</location>
    </subcellularLocation>
</comment>
<comment type="similarity">
    <text evidence="1">Belongs to the ArgR family.</text>
</comment>
<organism>
    <name type="scientific">Bacteroides fragilis (strain YCH46)</name>
    <dbReference type="NCBI Taxonomy" id="295405"/>
    <lineage>
        <taxon>Bacteria</taxon>
        <taxon>Pseudomonadati</taxon>
        <taxon>Bacteroidota</taxon>
        <taxon>Bacteroidia</taxon>
        <taxon>Bacteroidales</taxon>
        <taxon>Bacteroidaceae</taxon>
        <taxon>Bacteroides</taxon>
    </lineage>
</organism>
<evidence type="ECO:0000255" key="1">
    <source>
        <dbReference type="HAMAP-Rule" id="MF_00173"/>
    </source>
</evidence>
<accession>Q64YZ2</accession>
<feature type="chain" id="PRO_0000205065" description="Arginine repressor">
    <location>
        <begin position="1"/>
        <end position="157"/>
    </location>
</feature>
<protein>
    <recommendedName>
        <fullName evidence="1">Arginine repressor</fullName>
    </recommendedName>
</protein>
<gene>
    <name evidence="1" type="primary">argR</name>
    <name type="ordered locus">BF0535</name>
</gene>
<sequence length="157" mass="17303">MKKKANRLDAIKMIISSKEVGSQEELLQELGQEGFELTQATLSRDLKQLKVAKAASMNGKYVYVLPNDIMYKRVGDQSASEMLMNNGFISLQFSGNIAVIKTRPGYASSMAYDIDNRESDTILGTIAGDDTIMLVLREGATPTAVRHFLSLIIPNIN</sequence>
<name>ARGR_BACFR</name>
<dbReference type="EMBL" id="AP006841">
    <property type="protein sequence ID" value="BAD47284.1"/>
    <property type="molecule type" value="Genomic_DNA"/>
</dbReference>
<dbReference type="RefSeq" id="WP_005796492.1">
    <property type="nucleotide sequence ID" value="NZ_UYXF01000019.1"/>
</dbReference>
<dbReference type="RefSeq" id="YP_097818.1">
    <property type="nucleotide sequence ID" value="NC_006347.1"/>
</dbReference>
<dbReference type="SMR" id="Q64YZ2"/>
<dbReference type="STRING" id="295405.BF0535"/>
<dbReference type="KEGG" id="bfr:BF0535"/>
<dbReference type="PATRIC" id="fig|295405.11.peg.551"/>
<dbReference type="HOGENOM" id="CLU_097103_0_0_10"/>
<dbReference type="OrthoDB" id="9807089at2"/>
<dbReference type="UniPathway" id="UPA00068"/>
<dbReference type="Proteomes" id="UP000002197">
    <property type="component" value="Chromosome"/>
</dbReference>
<dbReference type="GO" id="GO:0005737">
    <property type="term" value="C:cytoplasm"/>
    <property type="evidence" value="ECO:0007669"/>
    <property type="project" value="UniProtKB-SubCell"/>
</dbReference>
<dbReference type="GO" id="GO:0034618">
    <property type="term" value="F:arginine binding"/>
    <property type="evidence" value="ECO:0007669"/>
    <property type="project" value="InterPro"/>
</dbReference>
<dbReference type="GO" id="GO:0003677">
    <property type="term" value="F:DNA binding"/>
    <property type="evidence" value="ECO:0007669"/>
    <property type="project" value="UniProtKB-KW"/>
</dbReference>
<dbReference type="GO" id="GO:0003700">
    <property type="term" value="F:DNA-binding transcription factor activity"/>
    <property type="evidence" value="ECO:0007669"/>
    <property type="project" value="UniProtKB-UniRule"/>
</dbReference>
<dbReference type="GO" id="GO:0006526">
    <property type="term" value="P:L-arginine biosynthetic process"/>
    <property type="evidence" value="ECO:0007669"/>
    <property type="project" value="UniProtKB-UniPathway"/>
</dbReference>
<dbReference type="GO" id="GO:0051259">
    <property type="term" value="P:protein complex oligomerization"/>
    <property type="evidence" value="ECO:0007669"/>
    <property type="project" value="InterPro"/>
</dbReference>
<dbReference type="GO" id="GO:1900079">
    <property type="term" value="P:regulation of arginine biosynthetic process"/>
    <property type="evidence" value="ECO:0007669"/>
    <property type="project" value="UniProtKB-UniRule"/>
</dbReference>
<dbReference type="Gene3D" id="3.30.1360.40">
    <property type="match status" value="1"/>
</dbReference>
<dbReference type="Gene3D" id="1.10.10.10">
    <property type="entry name" value="Winged helix-like DNA-binding domain superfamily/Winged helix DNA-binding domain"/>
    <property type="match status" value="1"/>
</dbReference>
<dbReference type="HAMAP" id="MF_00173">
    <property type="entry name" value="Arg_repressor"/>
    <property type="match status" value="1"/>
</dbReference>
<dbReference type="InterPro" id="IPR001669">
    <property type="entry name" value="Arg_repress"/>
</dbReference>
<dbReference type="InterPro" id="IPR020899">
    <property type="entry name" value="Arg_repress_C"/>
</dbReference>
<dbReference type="InterPro" id="IPR036251">
    <property type="entry name" value="Arg_repress_C_sf"/>
</dbReference>
<dbReference type="InterPro" id="IPR020900">
    <property type="entry name" value="Arg_repress_DNA-bd"/>
</dbReference>
<dbReference type="InterPro" id="IPR036388">
    <property type="entry name" value="WH-like_DNA-bd_sf"/>
</dbReference>
<dbReference type="InterPro" id="IPR036390">
    <property type="entry name" value="WH_DNA-bd_sf"/>
</dbReference>
<dbReference type="NCBIfam" id="TIGR01529">
    <property type="entry name" value="argR_whole"/>
    <property type="match status" value="1"/>
</dbReference>
<dbReference type="PANTHER" id="PTHR34471">
    <property type="entry name" value="ARGININE REPRESSOR"/>
    <property type="match status" value="1"/>
</dbReference>
<dbReference type="PANTHER" id="PTHR34471:SF1">
    <property type="entry name" value="ARGININE REPRESSOR"/>
    <property type="match status" value="1"/>
</dbReference>
<dbReference type="Pfam" id="PF01316">
    <property type="entry name" value="Arg_repressor"/>
    <property type="match status" value="1"/>
</dbReference>
<dbReference type="Pfam" id="PF02863">
    <property type="entry name" value="Arg_repressor_C"/>
    <property type="match status" value="1"/>
</dbReference>
<dbReference type="PRINTS" id="PR01467">
    <property type="entry name" value="ARGREPRESSOR"/>
</dbReference>
<dbReference type="SUPFAM" id="SSF55252">
    <property type="entry name" value="C-terminal domain of arginine repressor"/>
    <property type="match status" value="1"/>
</dbReference>
<dbReference type="SUPFAM" id="SSF46785">
    <property type="entry name" value="Winged helix' DNA-binding domain"/>
    <property type="match status" value="1"/>
</dbReference>